<reference key="1">
    <citation type="journal article" date="1999" name="Genetics">
        <title>Divergence of the hyperthermophilic archaea Pyrococcus furiosus and P. horikoshii inferred from complete genomic sequences.</title>
        <authorList>
            <person name="Maeder D.L."/>
            <person name="Weiss R.B."/>
            <person name="Dunn D.M."/>
            <person name="Cherry J.L."/>
            <person name="Gonzalez J.M."/>
            <person name="DiRuggiero J."/>
            <person name="Robb F.T."/>
        </authorList>
    </citation>
    <scope>NUCLEOTIDE SEQUENCE [LARGE SCALE GENOMIC DNA]</scope>
    <source>
        <strain>ATCC 43587 / DSM 3638 / JCM 8422 / Vc1</strain>
    </source>
</reference>
<comment type="function">
    <text evidence="1">Non-catalytic component of the exosome, which is a complex involved in RNA degradation. Increases the RNA binding and the efficiency of RNA degradation. Confers strong poly(A) specificity to the exosome.</text>
</comment>
<comment type="subunit">
    <text evidence="1">Component of the archaeal exosome complex. Forms a trimer of Rrp4 and/or Csl4 subunits. The trimer associates with a hexameric ring-like arrangement composed of 3 Rrp41-Rrp42 heterodimers.</text>
</comment>
<comment type="subcellular location">
    <subcellularLocation>
        <location evidence="1">Cytoplasm</location>
    </subcellularLocation>
</comment>
<comment type="similarity">
    <text evidence="1">Belongs to the RRP4 family.</text>
</comment>
<organism>
    <name type="scientific">Pyrococcus furiosus (strain ATCC 43587 / DSM 3638 / JCM 8422 / Vc1)</name>
    <dbReference type="NCBI Taxonomy" id="186497"/>
    <lineage>
        <taxon>Archaea</taxon>
        <taxon>Methanobacteriati</taxon>
        <taxon>Methanobacteriota</taxon>
        <taxon>Thermococci</taxon>
        <taxon>Thermococcales</taxon>
        <taxon>Thermococcaceae</taxon>
        <taxon>Pyrococcus</taxon>
    </lineage>
</organism>
<evidence type="ECO:0000255" key="1">
    <source>
        <dbReference type="HAMAP-Rule" id="MF_00623"/>
    </source>
</evidence>
<evidence type="ECO:0000256" key="2">
    <source>
        <dbReference type="SAM" id="MobiDB-lite"/>
    </source>
</evidence>
<keyword id="KW-0963">Cytoplasm</keyword>
<keyword id="KW-0271">Exosome</keyword>
<keyword id="KW-1185">Reference proteome</keyword>
<keyword id="KW-0694">RNA-binding</keyword>
<proteinExistence type="inferred from homology"/>
<sequence>MRRIFVQNRELVVPGTLLAQGPYKNGRGTFKEGSRIYSTVIGLVDIKGNTIRVIPLEGPYIPEVGDNVLGKIVDVKFSSWTVDIGSPYSATLKIQDYTDEKIDLLRTDLRKFFDIGDIIYAKVKGINEVNNIELTTKGMPFNGGPLRGGQIIKITSSKVPRVIGKGGSMINMIKKLTQSRIIVGQNGWIWISSKNPELEKLAIEAILKIERESHTRGLTDRIKNMLLSKLQELKERGVIEEIPSLEEETQEETVMENDVEARGP</sequence>
<feature type="chain" id="PRO_0000050152" description="Exosome complex component Rrp4">
    <location>
        <begin position="1"/>
        <end position="264"/>
    </location>
</feature>
<feature type="domain" description="S1 motif" evidence="1">
    <location>
        <begin position="65"/>
        <end position="137"/>
    </location>
</feature>
<feature type="domain" description="KH" evidence="1">
    <location>
        <begin position="147"/>
        <end position="206"/>
    </location>
</feature>
<feature type="region of interest" description="Disordered" evidence="2">
    <location>
        <begin position="244"/>
        <end position="264"/>
    </location>
</feature>
<feature type="compositionally biased region" description="Acidic residues" evidence="2">
    <location>
        <begin position="244"/>
        <end position="258"/>
    </location>
</feature>
<accession>Q8U0L8</accession>
<name>RRP4_PYRFU</name>
<protein>
    <recommendedName>
        <fullName evidence="1">Exosome complex component Rrp4</fullName>
    </recommendedName>
</protein>
<gene>
    <name evidence="1" type="primary">rrp4</name>
    <name type="ordered locus">PF1569</name>
</gene>
<dbReference type="EMBL" id="AE009950">
    <property type="protein sequence ID" value="AAL81693.1"/>
    <property type="molecule type" value="Genomic_DNA"/>
</dbReference>
<dbReference type="RefSeq" id="WP_011012715.1">
    <property type="nucleotide sequence ID" value="NZ_CP023154.1"/>
</dbReference>
<dbReference type="SMR" id="Q8U0L8"/>
<dbReference type="STRING" id="186497.PF1569"/>
<dbReference type="PaxDb" id="186497-PF1569"/>
<dbReference type="GeneID" id="41713393"/>
<dbReference type="KEGG" id="pfu:PF1569"/>
<dbReference type="PATRIC" id="fig|186497.12.peg.1635"/>
<dbReference type="eggNOG" id="arCOG00678">
    <property type="taxonomic scope" value="Archaea"/>
</dbReference>
<dbReference type="HOGENOM" id="CLU_071769_0_0_2"/>
<dbReference type="OrthoDB" id="35160at2157"/>
<dbReference type="PhylomeDB" id="Q8U0L8"/>
<dbReference type="Proteomes" id="UP000001013">
    <property type="component" value="Chromosome"/>
</dbReference>
<dbReference type="GO" id="GO:0005737">
    <property type="term" value="C:cytoplasm"/>
    <property type="evidence" value="ECO:0007669"/>
    <property type="project" value="UniProtKB-SubCell"/>
</dbReference>
<dbReference type="GO" id="GO:0000178">
    <property type="term" value="C:exosome (RNase complex)"/>
    <property type="evidence" value="ECO:0007669"/>
    <property type="project" value="UniProtKB-KW"/>
</dbReference>
<dbReference type="GO" id="GO:0008143">
    <property type="term" value="F:poly(A) binding"/>
    <property type="evidence" value="ECO:0007669"/>
    <property type="project" value="InterPro"/>
</dbReference>
<dbReference type="GO" id="GO:0071034">
    <property type="term" value="P:CUT catabolic process"/>
    <property type="evidence" value="ECO:0007669"/>
    <property type="project" value="TreeGrafter"/>
</dbReference>
<dbReference type="GO" id="GO:0000467">
    <property type="term" value="P:exonucleolytic trimming to generate mature 3'-end of 5.8S rRNA from tricistronic rRNA transcript (SSU-rRNA, 5.8S rRNA, LSU-rRNA)"/>
    <property type="evidence" value="ECO:0007669"/>
    <property type="project" value="TreeGrafter"/>
</dbReference>
<dbReference type="GO" id="GO:0071051">
    <property type="term" value="P:poly(A)-dependent snoRNA 3'-end processing"/>
    <property type="evidence" value="ECO:0007669"/>
    <property type="project" value="TreeGrafter"/>
</dbReference>
<dbReference type="GO" id="GO:0006401">
    <property type="term" value="P:RNA catabolic process"/>
    <property type="evidence" value="ECO:0007669"/>
    <property type="project" value="UniProtKB-UniRule"/>
</dbReference>
<dbReference type="GO" id="GO:0034475">
    <property type="term" value="P:U4 snRNA 3'-end processing"/>
    <property type="evidence" value="ECO:0007669"/>
    <property type="project" value="TreeGrafter"/>
</dbReference>
<dbReference type="CDD" id="cd22524">
    <property type="entry name" value="KH-I_Rrp4_prokar"/>
    <property type="match status" value="1"/>
</dbReference>
<dbReference type="CDD" id="cd05789">
    <property type="entry name" value="S1_Rrp4"/>
    <property type="match status" value="1"/>
</dbReference>
<dbReference type="FunFam" id="2.40.50.140:FF:000127">
    <property type="entry name" value="Exosome complex component RRP40"/>
    <property type="match status" value="1"/>
</dbReference>
<dbReference type="Gene3D" id="2.40.50.100">
    <property type="match status" value="1"/>
</dbReference>
<dbReference type="Gene3D" id="3.30.1370.10">
    <property type="entry name" value="K Homology domain, type 1"/>
    <property type="match status" value="1"/>
</dbReference>
<dbReference type="Gene3D" id="2.40.50.140">
    <property type="entry name" value="Nucleic acid-binding proteins"/>
    <property type="match status" value="1"/>
</dbReference>
<dbReference type="HAMAP" id="MF_00623">
    <property type="entry name" value="Exosome_Rrp4"/>
    <property type="match status" value="1"/>
</dbReference>
<dbReference type="InterPro" id="IPR026699">
    <property type="entry name" value="Exosome_RNA_bind1/RRP40/RRP4"/>
</dbReference>
<dbReference type="InterPro" id="IPR004087">
    <property type="entry name" value="KH_dom"/>
</dbReference>
<dbReference type="InterPro" id="IPR004088">
    <property type="entry name" value="KH_dom_type_1"/>
</dbReference>
<dbReference type="InterPro" id="IPR036612">
    <property type="entry name" value="KH_dom_type_1_sf"/>
</dbReference>
<dbReference type="InterPro" id="IPR012340">
    <property type="entry name" value="NA-bd_OB-fold"/>
</dbReference>
<dbReference type="InterPro" id="IPR023474">
    <property type="entry name" value="Rrp4"/>
</dbReference>
<dbReference type="InterPro" id="IPR054371">
    <property type="entry name" value="RRP4_N"/>
</dbReference>
<dbReference type="InterPro" id="IPR048565">
    <property type="entry name" value="RRP4_S1"/>
</dbReference>
<dbReference type="InterPro" id="IPR003029">
    <property type="entry name" value="S1_domain"/>
</dbReference>
<dbReference type="NCBIfam" id="NF003181">
    <property type="entry name" value="PRK04163.1-1"/>
    <property type="match status" value="1"/>
</dbReference>
<dbReference type="PANTHER" id="PTHR21321:SF4">
    <property type="entry name" value="EXOSOME COMPLEX COMPONENT RRP4"/>
    <property type="match status" value="1"/>
</dbReference>
<dbReference type="PANTHER" id="PTHR21321">
    <property type="entry name" value="PNAS-3 RELATED"/>
    <property type="match status" value="1"/>
</dbReference>
<dbReference type="Pfam" id="PF22625">
    <property type="entry name" value="ECR1_N_2"/>
    <property type="match status" value="1"/>
</dbReference>
<dbReference type="Pfam" id="PF15985">
    <property type="entry name" value="KH_6"/>
    <property type="match status" value="1"/>
</dbReference>
<dbReference type="Pfam" id="PF21266">
    <property type="entry name" value="RRP4_S1"/>
    <property type="match status" value="1"/>
</dbReference>
<dbReference type="SMART" id="SM00322">
    <property type="entry name" value="KH"/>
    <property type="match status" value="1"/>
</dbReference>
<dbReference type="SMART" id="SM00316">
    <property type="entry name" value="S1"/>
    <property type="match status" value="1"/>
</dbReference>
<dbReference type="SUPFAM" id="SSF50249">
    <property type="entry name" value="Nucleic acid-binding proteins"/>
    <property type="match status" value="1"/>
</dbReference>
<dbReference type="SUPFAM" id="SSF110324">
    <property type="entry name" value="Ribosomal L27 protein-like"/>
    <property type="match status" value="1"/>
</dbReference>
<dbReference type="PROSITE" id="PS50084">
    <property type="entry name" value="KH_TYPE_1"/>
    <property type="match status" value="1"/>
</dbReference>
<dbReference type="PROSITE" id="PS50126">
    <property type="entry name" value="S1"/>
    <property type="match status" value="1"/>
</dbReference>